<reference key="1">
    <citation type="journal article" date="2005" name="Nature">
        <title>Generation and annotation of the DNA sequences of human chromosomes 2 and 4.</title>
        <authorList>
            <person name="Hillier L.W."/>
            <person name="Graves T.A."/>
            <person name="Fulton R.S."/>
            <person name="Fulton L.A."/>
            <person name="Pepin K.H."/>
            <person name="Minx P."/>
            <person name="Wagner-McPherson C."/>
            <person name="Layman D."/>
            <person name="Wylie K."/>
            <person name="Sekhon M."/>
            <person name="Becker M.C."/>
            <person name="Fewell G.A."/>
            <person name="Delehaunty K.D."/>
            <person name="Miner T.L."/>
            <person name="Nash W.E."/>
            <person name="Kremitzki C."/>
            <person name="Oddy L."/>
            <person name="Du H."/>
            <person name="Sun H."/>
            <person name="Bradshaw-Cordum H."/>
            <person name="Ali J."/>
            <person name="Carter J."/>
            <person name="Cordes M."/>
            <person name="Harris A."/>
            <person name="Isak A."/>
            <person name="van Brunt A."/>
            <person name="Nguyen C."/>
            <person name="Du F."/>
            <person name="Courtney L."/>
            <person name="Kalicki J."/>
            <person name="Ozersky P."/>
            <person name="Abbott S."/>
            <person name="Armstrong J."/>
            <person name="Belter E.A."/>
            <person name="Caruso L."/>
            <person name="Cedroni M."/>
            <person name="Cotton M."/>
            <person name="Davidson T."/>
            <person name="Desai A."/>
            <person name="Elliott G."/>
            <person name="Erb T."/>
            <person name="Fronick C."/>
            <person name="Gaige T."/>
            <person name="Haakenson W."/>
            <person name="Haglund K."/>
            <person name="Holmes A."/>
            <person name="Harkins R."/>
            <person name="Kim K."/>
            <person name="Kruchowski S.S."/>
            <person name="Strong C.M."/>
            <person name="Grewal N."/>
            <person name="Goyea E."/>
            <person name="Hou S."/>
            <person name="Levy A."/>
            <person name="Martinka S."/>
            <person name="Mead K."/>
            <person name="McLellan M.D."/>
            <person name="Meyer R."/>
            <person name="Randall-Maher J."/>
            <person name="Tomlinson C."/>
            <person name="Dauphin-Kohlberg S."/>
            <person name="Kozlowicz-Reilly A."/>
            <person name="Shah N."/>
            <person name="Swearengen-Shahid S."/>
            <person name="Snider J."/>
            <person name="Strong J.T."/>
            <person name="Thompson J."/>
            <person name="Yoakum M."/>
            <person name="Leonard S."/>
            <person name="Pearman C."/>
            <person name="Trani L."/>
            <person name="Radionenko M."/>
            <person name="Waligorski J.E."/>
            <person name="Wang C."/>
            <person name="Rock S.M."/>
            <person name="Tin-Wollam A.-M."/>
            <person name="Maupin R."/>
            <person name="Latreille P."/>
            <person name="Wendl M.C."/>
            <person name="Yang S.-P."/>
            <person name="Pohl C."/>
            <person name="Wallis J.W."/>
            <person name="Spieth J."/>
            <person name="Bieri T.A."/>
            <person name="Berkowicz N."/>
            <person name="Nelson J.O."/>
            <person name="Osborne J."/>
            <person name="Ding L."/>
            <person name="Meyer R."/>
            <person name="Sabo A."/>
            <person name="Shotland Y."/>
            <person name="Sinha P."/>
            <person name="Wohldmann P.E."/>
            <person name="Cook L.L."/>
            <person name="Hickenbotham M.T."/>
            <person name="Eldred J."/>
            <person name="Williams D."/>
            <person name="Jones T.A."/>
            <person name="She X."/>
            <person name="Ciccarelli F.D."/>
            <person name="Izaurralde E."/>
            <person name="Taylor J."/>
            <person name="Schmutz J."/>
            <person name="Myers R.M."/>
            <person name="Cox D.R."/>
            <person name="Huang X."/>
            <person name="McPherson J.D."/>
            <person name="Mardis E.R."/>
            <person name="Clifton S.W."/>
            <person name="Warren W.C."/>
            <person name="Chinwalla A.T."/>
            <person name="Eddy S.R."/>
            <person name="Marra M.A."/>
            <person name="Ovcharenko I."/>
            <person name="Furey T.S."/>
            <person name="Miller W."/>
            <person name="Eichler E.E."/>
            <person name="Bork P."/>
            <person name="Suyama M."/>
            <person name="Torrents D."/>
            <person name="Waterston R.H."/>
            <person name="Wilson R.K."/>
        </authorList>
    </citation>
    <scope>NUCLEOTIDE SEQUENCE [LARGE SCALE GENOMIC DNA]</scope>
</reference>
<reference key="2">
    <citation type="journal article" date="2004" name="Genome Res.">
        <title>The status, quality, and expansion of the NIH full-length cDNA project: the Mammalian Gene Collection (MGC).</title>
        <authorList>
            <consortium name="The MGC Project Team"/>
        </authorList>
    </citation>
    <scope>NUCLEOTIDE SEQUENCE [LARGE SCALE MRNA]</scope>
</reference>
<reference key="3">
    <citation type="journal article" date="2021" name="Hum. Genet.">
        <title>A biallelic variant in CLRN2 causes non-syndromic hearing loss in humans.</title>
        <authorList>
            <person name="Vona B."/>
            <person name="Mazaheri N."/>
            <person name="Lin S.J."/>
            <person name="Dunbar L.A."/>
            <person name="Maroofian R."/>
            <person name="Azaiez H."/>
            <person name="Booth K.T."/>
            <person name="Vitry S."/>
            <person name="Rad A."/>
            <person name="Rueschendorf F."/>
            <person name="Varshney P."/>
            <person name="Fowler B."/>
            <person name="Beetz C."/>
            <person name="Alagramam K.N."/>
            <person name="Murphy D."/>
            <person name="Shariati G."/>
            <person name="Sedaghat A."/>
            <person name="Houlden H."/>
            <person name="Petree C."/>
            <person name="VijayKumar S."/>
            <person name="Smith R.J.H."/>
            <person name="Haaf T."/>
            <person name="El-Amraoui A."/>
            <person name="Bowl M.R."/>
            <person name="Varshney G.K."/>
            <person name="Galehdari H."/>
        </authorList>
    </citation>
    <scope>INVOLVEMENT IN DFNB117</scope>
    <scope>VARIANT DFNB117 LYS-165</scope>
</reference>
<protein>
    <recommendedName>
        <fullName>Clarin-2</fullName>
    </recommendedName>
</protein>
<dbReference type="EMBL" id="AC093600">
    <property type="status" value="NOT_ANNOTATED_CDS"/>
    <property type="molecule type" value="Genomic_DNA"/>
</dbReference>
<dbReference type="EMBL" id="BC127863">
    <property type="protein sequence ID" value="AAI27864.1"/>
    <property type="molecule type" value="mRNA"/>
</dbReference>
<dbReference type="CCDS" id="CCDS47032.1"/>
<dbReference type="RefSeq" id="NP_001073296.1">
    <property type="nucleotide sequence ID" value="NM_001079827.2"/>
</dbReference>
<dbReference type="BioGRID" id="570156">
    <property type="interactions" value="76"/>
</dbReference>
<dbReference type="FunCoup" id="A0PK11">
    <property type="interactions" value="15"/>
</dbReference>
<dbReference type="IntAct" id="A0PK11">
    <property type="interactions" value="75"/>
</dbReference>
<dbReference type="STRING" id="9606.ENSP00000424711"/>
<dbReference type="TCDB" id="9.A.46.1.2">
    <property type="family name" value="the clarin (clrn) family"/>
</dbReference>
<dbReference type="GlyCosmos" id="A0PK11">
    <property type="glycosylation" value="1 site, No reported glycans"/>
</dbReference>
<dbReference type="GlyGen" id="A0PK11">
    <property type="glycosylation" value="1 site"/>
</dbReference>
<dbReference type="BioMuta" id="CLRN2"/>
<dbReference type="jPOST" id="A0PK11"/>
<dbReference type="MassIVE" id="A0PK11"/>
<dbReference type="PaxDb" id="9606-ENSP00000424711"/>
<dbReference type="PeptideAtlas" id="A0PK11"/>
<dbReference type="Antibodypedia" id="51092">
    <property type="antibodies" value="40 antibodies from 12 providers"/>
</dbReference>
<dbReference type="DNASU" id="645104"/>
<dbReference type="Ensembl" id="ENST00000511148.2">
    <property type="protein sequence ID" value="ENSP00000424711.2"/>
    <property type="gene ID" value="ENSG00000249581.2"/>
</dbReference>
<dbReference type="GeneID" id="645104"/>
<dbReference type="KEGG" id="hsa:645104"/>
<dbReference type="MANE-Select" id="ENST00000511148.2">
    <property type="protein sequence ID" value="ENSP00000424711.2"/>
    <property type="RefSeq nucleotide sequence ID" value="NM_001079827.2"/>
    <property type="RefSeq protein sequence ID" value="NP_001073296.1"/>
</dbReference>
<dbReference type="UCSC" id="uc003gpg.1">
    <property type="organism name" value="human"/>
</dbReference>
<dbReference type="AGR" id="HGNC:33939"/>
<dbReference type="CTD" id="645104"/>
<dbReference type="DisGeNET" id="645104"/>
<dbReference type="GeneCards" id="CLRN2"/>
<dbReference type="HGNC" id="HGNC:33939">
    <property type="gene designation" value="CLRN2"/>
</dbReference>
<dbReference type="HPA" id="ENSG00000249581">
    <property type="expression patterns" value="Not detected"/>
</dbReference>
<dbReference type="MalaCards" id="CLRN2"/>
<dbReference type="MIM" id="618988">
    <property type="type" value="gene"/>
</dbReference>
<dbReference type="MIM" id="619174">
    <property type="type" value="phenotype"/>
</dbReference>
<dbReference type="neXtProt" id="NX_A0PK11"/>
<dbReference type="OpenTargets" id="ENSG00000249581"/>
<dbReference type="PharmGKB" id="PA162382499"/>
<dbReference type="VEuPathDB" id="HostDB:ENSG00000249581"/>
<dbReference type="eggNOG" id="ENOG502QUCR">
    <property type="taxonomic scope" value="Eukaryota"/>
</dbReference>
<dbReference type="GeneTree" id="ENSGT00850000132319"/>
<dbReference type="HOGENOM" id="CLU_095723_1_0_1"/>
<dbReference type="InParanoid" id="A0PK11"/>
<dbReference type="OMA" id="PKWMTGK"/>
<dbReference type="OrthoDB" id="10012538at2759"/>
<dbReference type="PAN-GO" id="A0PK11">
    <property type="GO annotations" value="0 GO annotations based on evolutionary models"/>
</dbReference>
<dbReference type="PhylomeDB" id="A0PK11"/>
<dbReference type="TreeFam" id="TF331875"/>
<dbReference type="PathwayCommons" id="A0PK11"/>
<dbReference type="SignaLink" id="A0PK11"/>
<dbReference type="BioGRID-ORCS" id="645104">
    <property type="hits" value="9 hits in 1141 CRISPR screens"/>
</dbReference>
<dbReference type="GenomeRNAi" id="645104"/>
<dbReference type="Pharos" id="A0PK11">
    <property type="development level" value="Tdark"/>
</dbReference>
<dbReference type="PRO" id="PR:A0PK11"/>
<dbReference type="Proteomes" id="UP000005640">
    <property type="component" value="Chromosome 4"/>
</dbReference>
<dbReference type="RNAct" id="A0PK11">
    <property type="molecule type" value="protein"/>
</dbReference>
<dbReference type="Bgee" id="ENSG00000249581">
    <property type="expression patterns" value="Expressed in cortical plate and 16 other cell types or tissues"/>
</dbReference>
<dbReference type="GO" id="GO:0032421">
    <property type="term" value="C:stereocilium bundle"/>
    <property type="evidence" value="ECO:0000250"/>
    <property type="project" value="UniProtKB"/>
</dbReference>
<dbReference type="GO" id="GO:0060171">
    <property type="term" value="C:stereocilium membrane"/>
    <property type="evidence" value="ECO:0007669"/>
    <property type="project" value="UniProtKB-SubCell"/>
</dbReference>
<dbReference type="GO" id="GO:0060088">
    <property type="term" value="P:auditory receptor cell stereocilium organization"/>
    <property type="evidence" value="ECO:0000250"/>
    <property type="project" value="UniProtKB"/>
</dbReference>
<dbReference type="GO" id="GO:0007605">
    <property type="term" value="P:sensory perception of sound"/>
    <property type="evidence" value="ECO:0000315"/>
    <property type="project" value="UniProtKB"/>
</dbReference>
<dbReference type="GO" id="GO:0120045">
    <property type="term" value="P:stereocilium maintenance"/>
    <property type="evidence" value="ECO:0000250"/>
    <property type="project" value="UniProtKB"/>
</dbReference>
<dbReference type="Gene3D" id="1.20.140.150">
    <property type="match status" value="1"/>
</dbReference>
<dbReference type="InterPro" id="IPR026748">
    <property type="entry name" value="Clarin"/>
</dbReference>
<dbReference type="PANTHER" id="PTHR31548">
    <property type="entry name" value="CLARIN"/>
    <property type="match status" value="1"/>
</dbReference>
<dbReference type="PANTHER" id="PTHR31548:SF5">
    <property type="entry name" value="CLARIN-2"/>
    <property type="match status" value="1"/>
</dbReference>
<gene>
    <name evidence="5" type="primary">CLRN2</name>
</gene>
<feature type="chain" id="PRO_0000274697" description="Clarin-2">
    <location>
        <begin position="1"/>
        <end position="232"/>
    </location>
</feature>
<feature type="transmembrane region" description="Helical" evidence="2">
    <location>
        <begin position="10"/>
        <end position="30"/>
    </location>
</feature>
<feature type="transmembrane region" description="Helical" evidence="2">
    <location>
        <begin position="101"/>
        <end position="121"/>
    </location>
</feature>
<feature type="transmembrane region" description="Helical" evidence="2">
    <location>
        <begin position="139"/>
        <end position="159"/>
    </location>
</feature>
<feature type="transmembrane region" description="Helical" evidence="2">
    <location>
        <begin position="188"/>
        <end position="208"/>
    </location>
</feature>
<feature type="glycosylation site" description="N-linked (GlcNAc...) asparagine" evidence="2">
    <location>
        <position position="48"/>
    </location>
</feature>
<feature type="sequence variant" id="VAR_053826" description="In dbSNP:rs13147559.">
    <original>L</original>
    <variation>V</variation>
    <location>
        <position position="113"/>
    </location>
</feature>
<feature type="sequence variant" id="VAR_053827" description="In dbSNP:rs2597791.">
    <original>A</original>
    <variation>T</variation>
    <location>
        <position position="153"/>
    </location>
</feature>
<feature type="sequence variant" id="VAR_085237" description="In DFNB117; due to a nucleotide substitution that can result in aberrant splicing; patient cells contain both normally spliced transcripts and transcripts that retained intron 2; dbSNP:rs1711990645." evidence="3">
    <original>T</original>
    <variation>K</variation>
    <location>
        <position position="165"/>
    </location>
</feature>
<evidence type="ECO:0000250" key="1">
    <source>
        <dbReference type="UniProtKB" id="B2RVW2"/>
    </source>
</evidence>
<evidence type="ECO:0000255" key="2"/>
<evidence type="ECO:0000269" key="3">
    <source>
    </source>
</evidence>
<evidence type="ECO:0000305" key="4"/>
<evidence type="ECO:0000312" key="5">
    <source>
        <dbReference type="HGNC" id="HGNC:33939"/>
    </source>
</evidence>
<accession>A0PK11</accession>
<sequence length="232" mass="25446">MPGWFKKAWYGLASLLSFSSFILIIVALVVPHWLSGKILCQTGVDLVNATDRELVKFIGDIYYGLFRGCKVRQCGLGGRQSQFTIFPHLVKELNAGLHVMILLLLFLALALALVSMGFAILNMIQVPYRAVSGPGGICLWNVLAGGVVALAIASFVAAVKFHDLTERIANFQEKLFQFVVVEEQYEESFWICVASASAHAANLVVVAISQIPLPEIKTKIEEATVTAEDILY</sequence>
<proteinExistence type="evidence at protein level"/>
<name>CLRN2_HUMAN</name>
<keyword id="KW-1003">Cell membrane</keyword>
<keyword id="KW-0966">Cell projection</keyword>
<keyword id="KW-0209">Deafness</keyword>
<keyword id="KW-0225">Disease variant</keyword>
<keyword id="KW-0325">Glycoprotein</keyword>
<keyword id="KW-1009">Hearing</keyword>
<keyword id="KW-0472">Membrane</keyword>
<keyword id="KW-1010">Non-syndromic deafness</keyword>
<keyword id="KW-1185">Reference proteome</keyword>
<keyword id="KW-0812">Transmembrane</keyword>
<keyword id="KW-1133">Transmembrane helix</keyword>
<comment type="function">
    <text evidence="1">Plays a key role to hearing function. Required for normal organization and maintenance of the stereocilia bundle and for mechano-electrical transduction.</text>
</comment>
<comment type="interaction">
    <interactant intactId="EBI-12813623">
        <id>A0PK11</id>
    </interactant>
    <interactant intactId="EBI-2808844">
        <id>Q8N6S5</id>
        <label>ARL6IP6</label>
    </interactant>
    <organismsDiffer>false</organismsDiffer>
    <experiments>3</experiments>
</comment>
<comment type="interaction">
    <interactant intactId="EBI-12813623">
        <id>A0PK11</id>
    </interactant>
    <interactant intactId="EBI-18400628">
        <id>O00501</id>
        <label>CLDN5</label>
    </interactant>
    <organismsDiffer>false</organismsDiffer>
    <experiments>3</experiments>
</comment>
<comment type="interaction">
    <interactant intactId="EBI-12813623">
        <id>A0PK11</id>
    </interactant>
    <interactant intactId="EBI-11749983">
        <id>Q9UHP7-3</id>
        <label>CLEC2D</label>
    </interactant>
    <organismsDiffer>false</organismsDiffer>
    <experiments>3</experiments>
</comment>
<comment type="interaction">
    <interactant intactId="EBI-12813623">
        <id>A0PK11</id>
    </interactant>
    <interactant intactId="EBI-12142257">
        <id>Q8TBE3</id>
        <label>FNDC9</label>
    </interactant>
    <organismsDiffer>false</organismsDiffer>
    <experiments>3</experiments>
</comment>
<comment type="interaction">
    <interactant intactId="EBI-12813623">
        <id>A0PK11</id>
    </interactant>
    <interactant intactId="EBI-9018187">
        <id>P26715</id>
        <label>KLRC1</label>
    </interactant>
    <organismsDiffer>false</organismsDiffer>
    <experiments>3</experiments>
</comment>
<comment type="interaction">
    <interactant intactId="EBI-12813623">
        <id>A0PK11</id>
    </interactant>
    <interactant intactId="EBI-11304917">
        <id>Q8N386</id>
        <label>LRRC25</label>
    </interactant>
    <organismsDiffer>false</organismsDiffer>
    <experiments>3</experiments>
</comment>
<comment type="interaction">
    <interactant intactId="EBI-12813623">
        <id>A0PK11</id>
    </interactant>
    <interactant intactId="EBI-10969203">
        <id>O14524-2</id>
        <label>NEMP1</label>
    </interactant>
    <organismsDiffer>false</organismsDiffer>
    <experiments>3</experiments>
</comment>
<comment type="interaction">
    <interactant intactId="EBI-12813623">
        <id>A0PK11</id>
    </interactant>
    <interactant intactId="EBI-6977215">
        <id>Q9Y3P8</id>
        <label>SIT1</label>
    </interactant>
    <organismsDiffer>false</organismsDiffer>
    <experiments>3</experiments>
</comment>
<comment type="interaction">
    <interactant intactId="EBI-12813623">
        <id>A0PK11</id>
    </interactant>
    <interactant intactId="EBI-17280858">
        <id>Q8WWF3</id>
        <label>SSMEM1</label>
    </interactant>
    <organismsDiffer>false</organismsDiffer>
    <experiments>3</experiments>
</comment>
<comment type="interaction">
    <interactant intactId="EBI-12813623">
        <id>A0PK11</id>
    </interactant>
    <interactant intactId="EBI-1211440">
        <id>P27105</id>
        <label>STOM</label>
    </interactant>
    <organismsDiffer>false</organismsDiffer>
    <experiments>3</experiments>
</comment>
<comment type="interaction">
    <interactant intactId="EBI-12813623">
        <id>A0PK11</id>
    </interactant>
    <interactant intactId="EBI-19027521">
        <id>Q8N6K0</id>
        <label>TEX29</label>
    </interactant>
    <organismsDiffer>false</organismsDiffer>
    <experiments>3</experiments>
</comment>
<comment type="interaction">
    <interactant intactId="EBI-12813623">
        <id>A0PK11</id>
    </interactant>
    <interactant intactId="EBI-744988">
        <id>Q9H7M9</id>
        <label>VSIR</label>
    </interactant>
    <organismsDiffer>false</organismsDiffer>
    <experiments>3</experiments>
</comment>
<comment type="subcellular location">
    <subcellularLocation>
        <location evidence="1">Cell projection</location>
        <location evidence="1">Stereocilium membrane</location>
        <topology evidence="2">Multi-pass membrane protein</topology>
    </subcellularLocation>
</comment>
<comment type="disease" evidence="3">
    <disease id="DI-06028">
        <name>Deafness, autosomal recessive, 117</name>
        <acronym>DFNB117</acronym>
        <description>A form of non-syndromic deafness characterized by prelingual, moderate-to-profound sensorineural hearing loss. Sensorineural hearing loss results from damage to the neural receptors of the inner ear, the nerve pathways to the brain, or the area of the brain that receives sound information.</description>
        <dbReference type="MIM" id="619174"/>
    </disease>
    <text>The disease is caused by variants affecting the gene represented in this entry.</text>
</comment>
<comment type="similarity">
    <text evidence="4">Belongs to the clarin family.</text>
</comment>
<organism>
    <name type="scientific">Homo sapiens</name>
    <name type="common">Human</name>
    <dbReference type="NCBI Taxonomy" id="9606"/>
    <lineage>
        <taxon>Eukaryota</taxon>
        <taxon>Metazoa</taxon>
        <taxon>Chordata</taxon>
        <taxon>Craniata</taxon>
        <taxon>Vertebrata</taxon>
        <taxon>Euteleostomi</taxon>
        <taxon>Mammalia</taxon>
        <taxon>Eutheria</taxon>
        <taxon>Euarchontoglires</taxon>
        <taxon>Primates</taxon>
        <taxon>Haplorrhini</taxon>
        <taxon>Catarrhini</taxon>
        <taxon>Hominidae</taxon>
        <taxon>Homo</taxon>
    </lineage>
</organism>